<reference key="1">
    <citation type="journal article" date="2009" name="PLoS Genet.">
        <title>Organised genome dynamics in the Escherichia coli species results in highly diverse adaptive paths.</title>
        <authorList>
            <person name="Touchon M."/>
            <person name="Hoede C."/>
            <person name="Tenaillon O."/>
            <person name="Barbe V."/>
            <person name="Baeriswyl S."/>
            <person name="Bidet P."/>
            <person name="Bingen E."/>
            <person name="Bonacorsi S."/>
            <person name="Bouchier C."/>
            <person name="Bouvet O."/>
            <person name="Calteau A."/>
            <person name="Chiapello H."/>
            <person name="Clermont O."/>
            <person name="Cruveiller S."/>
            <person name="Danchin A."/>
            <person name="Diard M."/>
            <person name="Dossat C."/>
            <person name="Karoui M.E."/>
            <person name="Frapy E."/>
            <person name="Garry L."/>
            <person name="Ghigo J.M."/>
            <person name="Gilles A.M."/>
            <person name="Johnson J."/>
            <person name="Le Bouguenec C."/>
            <person name="Lescat M."/>
            <person name="Mangenot S."/>
            <person name="Martinez-Jehanne V."/>
            <person name="Matic I."/>
            <person name="Nassif X."/>
            <person name="Oztas S."/>
            <person name="Petit M.A."/>
            <person name="Pichon C."/>
            <person name="Rouy Z."/>
            <person name="Ruf C.S."/>
            <person name="Schneider D."/>
            <person name="Tourret J."/>
            <person name="Vacherie B."/>
            <person name="Vallenet D."/>
            <person name="Medigue C."/>
            <person name="Rocha E.P.C."/>
            <person name="Denamur E."/>
        </authorList>
    </citation>
    <scope>NUCLEOTIDE SEQUENCE [LARGE SCALE GENOMIC DNA]</scope>
    <source>
        <strain>ATCC 35469 / DSM 13698 / BCRC 15582 / CCUG 18766 / IAM 14443 / JCM 21226 / LMG 7866 / NBRC 102419 / NCTC 12128 / CDC 0568-73</strain>
    </source>
</reference>
<feature type="chain" id="PRO_1000126075" description="Glycogen synthase">
    <location>
        <begin position="1"/>
        <end position="477"/>
    </location>
</feature>
<feature type="binding site" evidence="1">
    <location>
        <position position="15"/>
    </location>
    <ligand>
        <name>ADP-alpha-D-glucose</name>
        <dbReference type="ChEBI" id="CHEBI:57498"/>
    </ligand>
</feature>
<keyword id="KW-0320">Glycogen biosynthesis</keyword>
<keyword id="KW-0328">Glycosyltransferase</keyword>
<keyword id="KW-0808">Transferase</keyword>
<protein>
    <recommendedName>
        <fullName evidence="1">Glycogen synthase</fullName>
        <ecNumber evidence="1">2.4.1.21</ecNumber>
    </recommendedName>
    <alternativeName>
        <fullName evidence="1">Starch [bacterial glycogen] synthase</fullName>
    </alternativeName>
</protein>
<evidence type="ECO:0000255" key="1">
    <source>
        <dbReference type="HAMAP-Rule" id="MF_00484"/>
    </source>
</evidence>
<comment type="function">
    <text evidence="1">Synthesizes alpha-1,4-glucan chains using ADP-glucose.</text>
</comment>
<comment type="catalytic activity">
    <reaction evidence="1">
        <text>[(1-&gt;4)-alpha-D-glucosyl](n) + ADP-alpha-D-glucose = [(1-&gt;4)-alpha-D-glucosyl](n+1) + ADP + H(+)</text>
        <dbReference type="Rhea" id="RHEA:18189"/>
        <dbReference type="Rhea" id="RHEA-COMP:9584"/>
        <dbReference type="Rhea" id="RHEA-COMP:9587"/>
        <dbReference type="ChEBI" id="CHEBI:15378"/>
        <dbReference type="ChEBI" id="CHEBI:15444"/>
        <dbReference type="ChEBI" id="CHEBI:57498"/>
        <dbReference type="ChEBI" id="CHEBI:456216"/>
        <dbReference type="EC" id="2.4.1.21"/>
    </reaction>
</comment>
<comment type="pathway">
    <text evidence="1">Glycan biosynthesis; glycogen biosynthesis.</text>
</comment>
<comment type="similarity">
    <text evidence="1">Belongs to the glycosyltransferase 1 family. Bacterial/plant glycogen synthase subfamily.</text>
</comment>
<dbReference type="EC" id="2.4.1.21" evidence="1"/>
<dbReference type="EMBL" id="CU928158">
    <property type="protein sequence ID" value="CAQ90883.1"/>
    <property type="molecule type" value="Genomic_DNA"/>
</dbReference>
<dbReference type="RefSeq" id="WP_001197677.1">
    <property type="nucleotide sequence ID" value="NC_011740.1"/>
</dbReference>
<dbReference type="SMR" id="B7LSE0"/>
<dbReference type="CAZy" id="GT5">
    <property type="family name" value="Glycosyltransferase Family 5"/>
</dbReference>
<dbReference type="GeneID" id="75059986"/>
<dbReference type="KEGG" id="efe:EFER_3406"/>
<dbReference type="HOGENOM" id="CLU_009583_18_4_6"/>
<dbReference type="OrthoDB" id="9808590at2"/>
<dbReference type="UniPathway" id="UPA00164"/>
<dbReference type="Proteomes" id="UP000000745">
    <property type="component" value="Chromosome"/>
</dbReference>
<dbReference type="GO" id="GO:0005829">
    <property type="term" value="C:cytosol"/>
    <property type="evidence" value="ECO:0007669"/>
    <property type="project" value="TreeGrafter"/>
</dbReference>
<dbReference type="GO" id="GO:0009011">
    <property type="term" value="F:alpha-1,4-glucan glucosyltransferase (ADP-glucose donor) activity"/>
    <property type="evidence" value="ECO:0007669"/>
    <property type="project" value="UniProtKB-UniRule"/>
</dbReference>
<dbReference type="GO" id="GO:0004373">
    <property type="term" value="F:alpha-1,4-glucan glucosyltransferase (UDP-glucose donor) activity"/>
    <property type="evidence" value="ECO:0007669"/>
    <property type="project" value="InterPro"/>
</dbReference>
<dbReference type="GO" id="GO:0005978">
    <property type="term" value="P:glycogen biosynthetic process"/>
    <property type="evidence" value="ECO:0007669"/>
    <property type="project" value="UniProtKB-UniRule"/>
</dbReference>
<dbReference type="CDD" id="cd03791">
    <property type="entry name" value="GT5_Glycogen_synthase_DULL1-like"/>
    <property type="match status" value="1"/>
</dbReference>
<dbReference type="FunFam" id="3.40.50.2000:FF:000008">
    <property type="entry name" value="Glycogen synthase"/>
    <property type="match status" value="1"/>
</dbReference>
<dbReference type="FunFam" id="3.40.50.2000:FF:000011">
    <property type="entry name" value="Glycogen synthase"/>
    <property type="match status" value="1"/>
</dbReference>
<dbReference type="Gene3D" id="3.40.50.2000">
    <property type="entry name" value="Glycogen Phosphorylase B"/>
    <property type="match status" value="2"/>
</dbReference>
<dbReference type="HAMAP" id="MF_00484">
    <property type="entry name" value="Glycogen_synth"/>
    <property type="match status" value="1"/>
</dbReference>
<dbReference type="InterPro" id="IPR001296">
    <property type="entry name" value="Glyco_trans_1"/>
</dbReference>
<dbReference type="InterPro" id="IPR011835">
    <property type="entry name" value="GS/SS"/>
</dbReference>
<dbReference type="InterPro" id="IPR013534">
    <property type="entry name" value="Starch_synth_cat_dom"/>
</dbReference>
<dbReference type="NCBIfam" id="TIGR02095">
    <property type="entry name" value="glgA"/>
    <property type="match status" value="1"/>
</dbReference>
<dbReference type="NCBIfam" id="NF001899">
    <property type="entry name" value="PRK00654.1-2"/>
    <property type="match status" value="1"/>
</dbReference>
<dbReference type="PANTHER" id="PTHR45825:SF11">
    <property type="entry name" value="ALPHA AMYLASE DOMAIN-CONTAINING PROTEIN"/>
    <property type="match status" value="1"/>
</dbReference>
<dbReference type="PANTHER" id="PTHR45825">
    <property type="entry name" value="GRANULE-BOUND STARCH SYNTHASE 1, CHLOROPLASTIC/AMYLOPLASTIC"/>
    <property type="match status" value="1"/>
</dbReference>
<dbReference type="Pfam" id="PF08323">
    <property type="entry name" value="Glyco_transf_5"/>
    <property type="match status" value="1"/>
</dbReference>
<dbReference type="Pfam" id="PF00534">
    <property type="entry name" value="Glycos_transf_1"/>
    <property type="match status" value="1"/>
</dbReference>
<dbReference type="SUPFAM" id="SSF53756">
    <property type="entry name" value="UDP-Glycosyltransferase/glycogen phosphorylase"/>
    <property type="match status" value="1"/>
</dbReference>
<accession>B7LSE0</accession>
<name>GLGA_ESCF3</name>
<gene>
    <name evidence="1" type="primary">glgA</name>
    <name type="ordered locus">EFER_3406</name>
</gene>
<organism>
    <name type="scientific">Escherichia fergusonii (strain ATCC 35469 / DSM 13698 / CCUG 18766 / IAM 14443 / JCM 21226 / LMG 7866 / NBRC 102419 / NCTC 12128 / CDC 0568-73)</name>
    <dbReference type="NCBI Taxonomy" id="585054"/>
    <lineage>
        <taxon>Bacteria</taxon>
        <taxon>Pseudomonadati</taxon>
        <taxon>Pseudomonadota</taxon>
        <taxon>Gammaproteobacteria</taxon>
        <taxon>Enterobacterales</taxon>
        <taxon>Enterobacteriaceae</taxon>
        <taxon>Escherichia</taxon>
    </lineage>
</organism>
<proteinExistence type="inferred from homology"/>
<sequence length="477" mass="52936">MQVLHVCSEMFPLLKTGGLADVIGALPAVQIEDGVDARVLLPAFPDIRRGITDAQVVTRRDTFAGPITLLFGHYNGVGIYLIDAPHLYDRPGSPYHDTNLFAYTDNVIRFALLGWVGCEMACGLDPFWRPDVVHAHDWHAGLAPAYLAARGRPAKSVFTVHNLAYQGMFYAHHMDEIQLPWSFFNINGLEFNGQISFLKSGLYYADHITAVSPTYAREITEPQFAYGMEGLLQQRHREGRLSGVLNGVDEKIWSPETDLLLASRYTRDTLEEKAENKRQLQIAMGLKVDDKAPLFAVVSRLTSQKGLDLVLEALPGLLEQGGQLALLGAGDPVLQEGFLAAAAEHPGQVGVQIGYHEAFSHRIMGGADVILVPSRFEPCGLTQLYGLKYGTLPLVRRTGGLADTVSDSSLENLADGIASGFVFEDSNAWSLLRAIRRAFVLWSRPSLWRFVQRQAMSMDFSWHVAAKSYRELYYRLK</sequence>